<proteinExistence type="inferred from homology"/>
<sequence length="304" mass="33333">MSNVLELKIPASTANLGVGFDSIGMALDKFLHLSVKETSGTKWEYIFHDDASKQLPTDETNFIYHVAQQVAAKYSVDLPNLCIEMRSDIPLARGLGSSASALVGAIYIANYFGDIQLSKHEVLQLATEIEGHPDNVAPTIYGGLISGYYNDVSKETSVAHIDIPDVDVIVTIPTYELKTEASRRALPQKLTHSEAVKSSAISNTMICALAQHNYELAGKLMQQDGFHEPYRQHLIAEFDEVKTIASQHNAYATVISGAGPTILIFSRKENSGELVRALNRNVVTCHSELVDINVSGVKERIVYQ</sequence>
<evidence type="ECO:0000255" key="1">
    <source>
        <dbReference type="HAMAP-Rule" id="MF_00384"/>
    </source>
</evidence>
<reference key="1">
    <citation type="journal article" date="2007" name="PLoS ONE">
        <title>Molecular correlates of host specialization in Staphylococcus aureus.</title>
        <authorList>
            <person name="Herron-Olson L."/>
            <person name="Fitzgerald J.R."/>
            <person name="Musser J.M."/>
            <person name="Kapur V."/>
        </authorList>
    </citation>
    <scope>NUCLEOTIDE SEQUENCE [LARGE SCALE GENOMIC DNA]</scope>
    <source>
        <strain>bovine RF122 / ET3-1</strain>
    </source>
</reference>
<organism>
    <name type="scientific">Staphylococcus aureus (strain bovine RF122 / ET3-1)</name>
    <dbReference type="NCBI Taxonomy" id="273036"/>
    <lineage>
        <taxon>Bacteria</taxon>
        <taxon>Bacillati</taxon>
        <taxon>Bacillota</taxon>
        <taxon>Bacilli</taxon>
        <taxon>Bacillales</taxon>
        <taxon>Staphylococcaceae</taxon>
        <taxon>Staphylococcus</taxon>
    </lineage>
</organism>
<gene>
    <name evidence="1" type="primary">thrB</name>
    <name type="ordered locus">SAB1188</name>
</gene>
<keyword id="KW-0028">Amino-acid biosynthesis</keyword>
<keyword id="KW-0067">ATP-binding</keyword>
<keyword id="KW-0963">Cytoplasm</keyword>
<keyword id="KW-0418">Kinase</keyword>
<keyword id="KW-0547">Nucleotide-binding</keyword>
<keyword id="KW-0791">Threonine biosynthesis</keyword>
<keyword id="KW-0808">Transferase</keyword>
<dbReference type="EC" id="2.7.1.39" evidence="1"/>
<dbReference type="EMBL" id="AJ938182">
    <property type="protein sequence ID" value="CAI80877.1"/>
    <property type="molecule type" value="Genomic_DNA"/>
</dbReference>
<dbReference type="RefSeq" id="WP_000073172.1">
    <property type="nucleotide sequence ID" value="NC_007622.1"/>
</dbReference>
<dbReference type="SMR" id="Q2YXT6"/>
<dbReference type="KEGG" id="sab:SAB1188"/>
<dbReference type="HOGENOM" id="CLU_041243_0_0_9"/>
<dbReference type="UniPathway" id="UPA00050">
    <property type="reaction ID" value="UER00064"/>
</dbReference>
<dbReference type="GO" id="GO:0005737">
    <property type="term" value="C:cytoplasm"/>
    <property type="evidence" value="ECO:0007669"/>
    <property type="project" value="UniProtKB-SubCell"/>
</dbReference>
<dbReference type="GO" id="GO:0005524">
    <property type="term" value="F:ATP binding"/>
    <property type="evidence" value="ECO:0007669"/>
    <property type="project" value="UniProtKB-UniRule"/>
</dbReference>
<dbReference type="GO" id="GO:0004413">
    <property type="term" value="F:homoserine kinase activity"/>
    <property type="evidence" value="ECO:0007669"/>
    <property type="project" value="UniProtKB-UniRule"/>
</dbReference>
<dbReference type="GO" id="GO:0009088">
    <property type="term" value="P:threonine biosynthetic process"/>
    <property type="evidence" value="ECO:0007669"/>
    <property type="project" value="UniProtKB-UniRule"/>
</dbReference>
<dbReference type="Gene3D" id="3.30.230.10">
    <property type="match status" value="1"/>
</dbReference>
<dbReference type="Gene3D" id="3.30.70.890">
    <property type="entry name" value="GHMP kinase, C-terminal domain"/>
    <property type="match status" value="1"/>
</dbReference>
<dbReference type="HAMAP" id="MF_00384">
    <property type="entry name" value="Homoser_kinase"/>
    <property type="match status" value="1"/>
</dbReference>
<dbReference type="InterPro" id="IPR013750">
    <property type="entry name" value="GHMP_kinase_C_dom"/>
</dbReference>
<dbReference type="InterPro" id="IPR036554">
    <property type="entry name" value="GHMP_kinase_C_sf"/>
</dbReference>
<dbReference type="InterPro" id="IPR006204">
    <property type="entry name" value="GHMP_kinase_N_dom"/>
</dbReference>
<dbReference type="InterPro" id="IPR006203">
    <property type="entry name" value="GHMP_knse_ATP-bd_CS"/>
</dbReference>
<dbReference type="InterPro" id="IPR000870">
    <property type="entry name" value="Homoserine_kinase"/>
</dbReference>
<dbReference type="InterPro" id="IPR020568">
    <property type="entry name" value="Ribosomal_Su5_D2-typ_SF"/>
</dbReference>
<dbReference type="InterPro" id="IPR014721">
    <property type="entry name" value="Ribsml_uS5_D2-typ_fold_subgr"/>
</dbReference>
<dbReference type="NCBIfam" id="TIGR00191">
    <property type="entry name" value="thrB"/>
    <property type="match status" value="1"/>
</dbReference>
<dbReference type="PANTHER" id="PTHR20861:SF1">
    <property type="entry name" value="HOMOSERINE KINASE"/>
    <property type="match status" value="1"/>
</dbReference>
<dbReference type="PANTHER" id="PTHR20861">
    <property type="entry name" value="HOMOSERINE/4-DIPHOSPHOCYTIDYL-2-C-METHYL-D-ERYTHRITOL KINASE"/>
    <property type="match status" value="1"/>
</dbReference>
<dbReference type="Pfam" id="PF08544">
    <property type="entry name" value="GHMP_kinases_C"/>
    <property type="match status" value="1"/>
</dbReference>
<dbReference type="Pfam" id="PF00288">
    <property type="entry name" value="GHMP_kinases_N"/>
    <property type="match status" value="1"/>
</dbReference>
<dbReference type="PIRSF" id="PIRSF000676">
    <property type="entry name" value="Homoser_kin"/>
    <property type="match status" value="1"/>
</dbReference>
<dbReference type="PRINTS" id="PR00958">
    <property type="entry name" value="HOMSERKINASE"/>
</dbReference>
<dbReference type="SUPFAM" id="SSF55060">
    <property type="entry name" value="GHMP Kinase, C-terminal domain"/>
    <property type="match status" value="1"/>
</dbReference>
<dbReference type="SUPFAM" id="SSF54211">
    <property type="entry name" value="Ribosomal protein S5 domain 2-like"/>
    <property type="match status" value="1"/>
</dbReference>
<dbReference type="PROSITE" id="PS00627">
    <property type="entry name" value="GHMP_KINASES_ATP"/>
    <property type="match status" value="1"/>
</dbReference>
<accession>Q2YXT6</accession>
<comment type="function">
    <text evidence="1">Catalyzes the ATP-dependent phosphorylation of L-homoserine to L-homoserine phosphate.</text>
</comment>
<comment type="catalytic activity">
    <reaction evidence="1">
        <text>L-homoserine + ATP = O-phospho-L-homoserine + ADP + H(+)</text>
        <dbReference type="Rhea" id="RHEA:13985"/>
        <dbReference type="ChEBI" id="CHEBI:15378"/>
        <dbReference type="ChEBI" id="CHEBI:30616"/>
        <dbReference type="ChEBI" id="CHEBI:57476"/>
        <dbReference type="ChEBI" id="CHEBI:57590"/>
        <dbReference type="ChEBI" id="CHEBI:456216"/>
        <dbReference type="EC" id="2.7.1.39"/>
    </reaction>
</comment>
<comment type="pathway">
    <text evidence="1">Amino-acid biosynthesis; L-threonine biosynthesis; L-threonine from L-aspartate: step 4/5.</text>
</comment>
<comment type="subcellular location">
    <subcellularLocation>
        <location evidence="1">Cytoplasm</location>
    </subcellularLocation>
</comment>
<comment type="similarity">
    <text evidence="1">Belongs to the GHMP kinase family. Homoserine kinase subfamily.</text>
</comment>
<feature type="chain" id="PRO_1000049172" description="Homoserine kinase">
    <location>
        <begin position="1"/>
        <end position="304"/>
    </location>
</feature>
<feature type="binding site" evidence="1">
    <location>
        <begin position="90"/>
        <end position="100"/>
    </location>
    <ligand>
        <name>ATP</name>
        <dbReference type="ChEBI" id="CHEBI:30616"/>
    </ligand>
</feature>
<protein>
    <recommendedName>
        <fullName evidence="1">Homoserine kinase</fullName>
        <shortName evidence="1">HK</shortName>
        <shortName evidence="1">HSK</shortName>
        <ecNumber evidence="1">2.7.1.39</ecNumber>
    </recommendedName>
</protein>
<name>KHSE_STAAB</name>